<comment type="function">
    <text evidence="1">Catalyzes the transfer of CDP-ribitol to the distal N-acetylgalactosamine of the phosphorylated O-mannosyl trisaccharide (N-acetylgalactosamine-beta-3-N-acetylglucosamine-beta-4-(phosphate-6-)mannose), a carbohydrate structure present in alpha-dystroglycan (DAG1) (By similarity). This constitutes the first step in the formation of the ribitol 5-phosphate tandem repeat which links the phosphorylated O-mannosyl trisaccharide to the ligand binding moiety composed of repeats of 3-xylosyl-alpha-1,3-glucuronic acid-beta-1 (By similarity). May interact with and reinforce a large complex encompassing the outside and inside of muscle membranes. Could be involved in brain development (By similarity).</text>
</comment>
<comment type="catalytic activity">
    <reaction evidence="1">
        <text>3-O-[beta-D-GalNAc-(1-&gt;3)-beta-D-GlcNAc-(1-&gt;4)-(O-6-P-alpha-D-Man)]-Thr-[protein] + CDP-L-ribitol = 3-O-[Rib-ol-P-3-beta-D-GalNAc-(1-&gt;3)-beta-D-GlcNAc-(1-&gt;4)-(O-6-P-alpha-D-Man)]-Thr-[protein] + CMP + H(+)</text>
        <dbReference type="Rhea" id="RHEA:36551"/>
        <dbReference type="Rhea" id="RHEA-COMP:13309"/>
        <dbReference type="Rhea" id="RHEA-COMP:17480"/>
        <dbReference type="ChEBI" id="CHEBI:15378"/>
        <dbReference type="ChEBI" id="CHEBI:57608"/>
        <dbReference type="ChEBI" id="CHEBI:60377"/>
        <dbReference type="ChEBI" id="CHEBI:136710"/>
        <dbReference type="ChEBI" id="CHEBI:177331"/>
    </reaction>
    <physiologicalReaction direction="left-to-right" evidence="1">
        <dbReference type="Rhea" id="RHEA:36552"/>
    </physiologicalReaction>
</comment>
<comment type="pathway">
    <text evidence="1">Protein modification; protein glycosylation.</text>
</comment>
<comment type="subunit">
    <text evidence="1">Forms a complex composed of FKTN/fukutin, FKRP and RXYLT1/TMEM5 (By similarity). Interacts (via transmembrane domain) with POMGNT1; the interaction is direct and is required for normal POMGNT1 location in Golgi membranes (By similarity).</text>
</comment>
<comment type="subcellular location">
    <subcellularLocation>
        <location evidence="1">Golgi apparatus membrane</location>
        <topology evidence="1">Single-pass type II membrane protein</topology>
    </subcellularLocation>
    <subcellularLocation>
        <location evidence="2">Cytoplasm</location>
    </subcellularLocation>
    <subcellularLocation>
        <location evidence="2">Nucleus</location>
    </subcellularLocation>
    <text evidence="2">In retinal tissue, does not localize with the Golgi apparatus.</text>
</comment>
<comment type="tissue specificity">
    <text evidence="4">Expressed in the retina (at protein level).</text>
</comment>
<comment type="similarity">
    <text evidence="5">Belongs to the LicD transferase family.</text>
</comment>
<name>FKTN_MACFA</name>
<protein>
    <recommendedName>
        <fullName evidence="1">Ribitol-5-phosphate transferase FKTN</fullName>
        <ecNumber evidence="1">2.7.8.-</ecNumber>
    </recommendedName>
    <alternativeName>
        <fullName evidence="1">Fukutin</fullName>
    </alternativeName>
    <alternativeName>
        <fullName evidence="1">Fukuyama-type congenital muscular dystrophy protein</fullName>
    </alternativeName>
    <alternativeName>
        <fullName evidence="1">Ribitol-5-phosphate transferase</fullName>
    </alternativeName>
</protein>
<proteinExistence type="evidence at protein level"/>
<accession>Q60HG0</accession>
<organism>
    <name type="scientific">Macaca fascicularis</name>
    <name type="common">Crab-eating macaque</name>
    <name type="synonym">Cynomolgus monkey</name>
    <dbReference type="NCBI Taxonomy" id="9541"/>
    <lineage>
        <taxon>Eukaryota</taxon>
        <taxon>Metazoa</taxon>
        <taxon>Chordata</taxon>
        <taxon>Craniata</taxon>
        <taxon>Vertebrata</taxon>
        <taxon>Euteleostomi</taxon>
        <taxon>Mammalia</taxon>
        <taxon>Eutheria</taxon>
        <taxon>Euarchontoglires</taxon>
        <taxon>Primates</taxon>
        <taxon>Haplorrhini</taxon>
        <taxon>Catarrhini</taxon>
        <taxon>Cercopithecidae</taxon>
        <taxon>Cercopithecinae</taxon>
        <taxon>Macaca</taxon>
    </lineage>
</organism>
<keyword id="KW-0963">Cytoplasm</keyword>
<keyword id="KW-0325">Glycoprotein</keyword>
<keyword id="KW-0333">Golgi apparatus</keyword>
<keyword id="KW-0472">Membrane</keyword>
<keyword id="KW-0539">Nucleus</keyword>
<keyword id="KW-1185">Reference proteome</keyword>
<keyword id="KW-0735">Signal-anchor</keyword>
<keyword id="KW-0808">Transferase</keyword>
<keyword id="KW-0812">Transmembrane</keyword>
<keyword id="KW-1133">Transmembrane helix</keyword>
<dbReference type="EC" id="2.7.8.-" evidence="1"/>
<dbReference type="EMBL" id="AB125167">
    <property type="protein sequence ID" value="BAD51955.1"/>
    <property type="molecule type" value="mRNA"/>
</dbReference>
<dbReference type="STRING" id="9541.ENSMFAP00000022084"/>
<dbReference type="GlyCosmos" id="Q60HG0">
    <property type="glycosylation" value="1 site, No reported glycans"/>
</dbReference>
<dbReference type="eggNOG" id="ENOG502QUDN">
    <property type="taxonomic scope" value="Eukaryota"/>
</dbReference>
<dbReference type="OrthoDB" id="444255at2759"/>
<dbReference type="UniPathway" id="UPA00378"/>
<dbReference type="Proteomes" id="UP000233100">
    <property type="component" value="Unplaced"/>
</dbReference>
<dbReference type="GO" id="GO:0005801">
    <property type="term" value="C:cis-Golgi network"/>
    <property type="evidence" value="ECO:0000250"/>
    <property type="project" value="UniProtKB"/>
</dbReference>
<dbReference type="GO" id="GO:0005794">
    <property type="term" value="C:Golgi apparatus"/>
    <property type="evidence" value="ECO:0000250"/>
    <property type="project" value="UniProtKB"/>
</dbReference>
<dbReference type="GO" id="GO:0000139">
    <property type="term" value="C:Golgi membrane"/>
    <property type="evidence" value="ECO:0000250"/>
    <property type="project" value="UniProtKB"/>
</dbReference>
<dbReference type="GO" id="GO:0005634">
    <property type="term" value="C:nucleus"/>
    <property type="evidence" value="ECO:0007669"/>
    <property type="project" value="UniProtKB-SubCell"/>
</dbReference>
<dbReference type="GO" id="GO:0016780">
    <property type="term" value="F:phosphotransferase activity, for other substituted phosphate groups"/>
    <property type="evidence" value="ECO:0000250"/>
    <property type="project" value="UniProtKB"/>
</dbReference>
<dbReference type="GO" id="GO:0006493">
    <property type="term" value="P:protein O-linked glycosylation"/>
    <property type="evidence" value="ECO:0000250"/>
    <property type="project" value="UniProtKB"/>
</dbReference>
<dbReference type="GO" id="GO:0035269">
    <property type="term" value="P:protein O-linked mannosylation"/>
    <property type="evidence" value="ECO:0000250"/>
    <property type="project" value="UniProtKB"/>
</dbReference>
<dbReference type="InterPro" id="IPR009644">
    <property type="entry name" value="FKTN-rel"/>
</dbReference>
<dbReference type="InterPro" id="IPR045587">
    <property type="entry name" value="FKTN_N"/>
</dbReference>
<dbReference type="InterPro" id="IPR007074">
    <property type="entry name" value="LicD/FKTN/FKRP_NTP_transf"/>
</dbReference>
<dbReference type="PANTHER" id="PTHR15407">
    <property type="entry name" value="FUKUTIN-RELATED"/>
    <property type="match status" value="1"/>
</dbReference>
<dbReference type="PANTHER" id="PTHR15407:SF28">
    <property type="entry name" value="RIBITOL-5-PHOSPHATE TRANSFERASE FKTN"/>
    <property type="match status" value="1"/>
</dbReference>
<dbReference type="Pfam" id="PF19737">
    <property type="entry name" value="FKTN_N"/>
    <property type="match status" value="1"/>
</dbReference>
<dbReference type="Pfam" id="PF04991">
    <property type="entry name" value="LicD"/>
    <property type="match status" value="1"/>
</dbReference>
<gene>
    <name evidence="1" type="primary">FKTN</name>
    <name evidence="1" type="synonym">FCMD</name>
    <name type="ORF">QmoA-10950</name>
</gene>
<evidence type="ECO:0000250" key="1">
    <source>
        <dbReference type="UniProtKB" id="O75072"/>
    </source>
</evidence>
<evidence type="ECO:0000250" key="2">
    <source>
        <dbReference type="UniProtKB" id="Q8R507"/>
    </source>
</evidence>
<evidence type="ECO:0000255" key="3"/>
<evidence type="ECO:0000269" key="4">
    <source>
    </source>
</evidence>
<evidence type="ECO:0000305" key="5"/>
<reference key="1">
    <citation type="submission" date="2003-10" db="EMBL/GenBank/DDBJ databases">
        <title>Isolation and characterization of cDNA for macaque neurological disease genes.</title>
        <authorList>
            <person name="Kusuda J."/>
            <person name="Osada N."/>
            <person name="Tanuma R."/>
            <person name="Hirata M."/>
            <person name="Sugano S."/>
            <person name="Hashimoto K."/>
        </authorList>
    </citation>
    <scope>NUCLEOTIDE SEQUENCE [LARGE SCALE MRNA]</scope>
    <source>
        <tissue>Medulla oblongata</tissue>
    </source>
</reference>
<reference key="2">
    <citation type="journal article" date="2018" name="Mol. Vis.">
        <title>Expression in retinal neurons of fukutin and FKRP, the protein products of two dystroglycanopathy-causative genes.</title>
        <authorList>
            <person name="Haro C."/>
            <person name="Uribe M.L."/>
            <person name="Quereda C."/>
            <person name="Cruces J."/>
            <person name="Martin-Nieto J."/>
        </authorList>
    </citation>
    <scope>TISSUE SPECIFICITY</scope>
</reference>
<feature type="chain" id="PRO_0000204721" description="Ribitol-5-phosphate transferase FKTN">
    <location>
        <begin position="1"/>
        <end position="461"/>
    </location>
</feature>
<feature type="topological domain" description="Cytoplasmic" evidence="3">
    <location>
        <begin position="1"/>
        <end position="7"/>
    </location>
</feature>
<feature type="transmembrane region" description="Helical; Signal-anchor for type II membrane protein" evidence="3">
    <location>
        <begin position="8"/>
        <end position="28"/>
    </location>
</feature>
<feature type="topological domain" description="Lumenal" evidence="3">
    <location>
        <begin position="29"/>
        <end position="461"/>
    </location>
</feature>
<feature type="region of interest" description="Required and sufficient for interaction with POMGNT1" evidence="1">
    <location>
        <begin position="6"/>
        <end position="27"/>
    </location>
</feature>
<feature type="glycosylation site" description="N-linked (GlcNAc...) asparagine" evidence="3">
    <location>
        <position position="92"/>
    </location>
</feature>
<sequence>MSRINKNVVLALLTLTSSAFLLFQLYYYKHYLSTRNGAGLSKSKGSRIGFDSTQWRAVKKFIMLTSNQNVPVFLIDPLILELINKNFEQVKNTSQGSISQCTFFCVPRDFTAFALQYHLWKNEEGWFRIAENMGFQCLKIESKDPRLDGIDSLSGTEIPLHYICKLAAHAIHLVVFHERSSNYLWHGHLRLKEHIDRKFVPFRKLQFGRYPGAFDRPELQQVTVDGLEVLIPKDPMHFVEEVPHSRFIECRYKEARAFFQQYLDDNTVEAMAFRKSAKELLQLAAKTLNKLGVPFWLSSGTCLGWYRQCNIIPYSKDVDLGIFIQDYKSDIILAFQDAGLPLKHKFGKVEDSLELSFQGKDDVKLDIFFFYEETDHMWNGGTQAKTGKKFKYLFPKFTLCWTEFVDMKVHVPCETLEYIEANYGKTWKIPVKTWDWKRSPPNVQPNGIWPISEWDEVIQLY</sequence>